<feature type="chain" id="PRO_0000273376" description="RNA-binding protein 26">
    <location>
        <begin position="1"/>
        <end position="1007"/>
    </location>
</feature>
<feature type="domain" description="RRM 1" evidence="2">
    <location>
        <begin position="532"/>
        <end position="606"/>
    </location>
</feature>
<feature type="domain" description="RRM 2" evidence="2">
    <location>
        <begin position="891"/>
        <end position="960"/>
    </location>
</feature>
<feature type="zinc finger region" description="C3H1-type" evidence="3">
    <location>
        <begin position="288"/>
        <end position="316"/>
    </location>
</feature>
<feature type="region of interest" description="Disordered" evidence="4">
    <location>
        <begin position="106"/>
        <end position="241"/>
    </location>
</feature>
<feature type="region of interest" description="Disordered" evidence="4">
    <location>
        <begin position="334"/>
        <end position="404"/>
    </location>
</feature>
<feature type="region of interest" description="Disordered" evidence="4">
    <location>
        <begin position="460"/>
        <end position="519"/>
    </location>
</feature>
<feature type="region of interest" description="Disordered" evidence="4">
    <location>
        <begin position="853"/>
        <end position="884"/>
    </location>
</feature>
<feature type="region of interest" description="Disordered" evidence="4">
    <location>
        <begin position="966"/>
        <end position="1007"/>
    </location>
</feature>
<feature type="coiled-coil region" evidence="1">
    <location>
        <begin position="719"/>
        <end position="795"/>
    </location>
</feature>
<feature type="coiled-coil region" evidence="1">
    <location>
        <begin position="823"/>
        <end position="847"/>
    </location>
</feature>
<feature type="compositionally biased region" description="Basic and acidic residues" evidence="4">
    <location>
        <begin position="106"/>
        <end position="118"/>
    </location>
</feature>
<feature type="compositionally biased region" description="Basic and acidic residues" evidence="4">
    <location>
        <begin position="134"/>
        <end position="168"/>
    </location>
</feature>
<feature type="compositionally biased region" description="Basic residues" evidence="4">
    <location>
        <begin position="169"/>
        <end position="186"/>
    </location>
</feature>
<feature type="compositionally biased region" description="Basic and acidic residues" evidence="4">
    <location>
        <begin position="187"/>
        <end position="201"/>
    </location>
</feature>
<feature type="compositionally biased region" description="Basic and acidic residues" evidence="4">
    <location>
        <begin position="209"/>
        <end position="227"/>
    </location>
</feature>
<feature type="compositionally biased region" description="Polar residues" evidence="4">
    <location>
        <begin position="228"/>
        <end position="241"/>
    </location>
</feature>
<feature type="compositionally biased region" description="Pro residues" evidence="4">
    <location>
        <begin position="334"/>
        <end position="388"/>
    </location>
</feature>
<feature type="compositionally biased region" description="Low complexity" evidence="4">
    <location>
        <begin position="394"/>
        <end position="404"/>
    </location>
</feature>
<feature type="compositionally biased region" description="Basic residues" evidence="4">
    <location>
        <begin position="857"/>
        <end position="877"/>
    </location>
</feature>
<feature type="compositionally biased region" description="Acidic residues" evidence="4">
    <location>
        <begin position="968"/>
        <end position="1000"/>
    </location>
</feature>
<feature type="modified residue" description="Phosphoserine" evidence="13 14 17 18 19">
    <location>
        <position position="127"/>
    </location>
</feature>
<feature type="modified residue" description="Phosphoserine" evidence="19">
    <location>
        <position position="496"/>
    </location>
</feature>
<feature type="modified residue" description="N6-acetyllysine" evidence="16">
    <location>
        <position position="510"/>
    </location>
</feature>
<feature type="modified residue" description="Phosphoserine" evidence="15 19 20">
    <location>
        <position position="518"/>
    </location>
</feature>
<feature type="modified residue" description="Phosphoserine" evidence="12 15 20">
    <location>
        <position position="616"/>
    </location>
</feature>
<feature type="cross-link" description="Glycyl lysine isopeptide (Lys-Gly) (interchain with G-Cter in SUMO2)" evidence="22">
    <location>
        <position position="94"/>
    </location>
</feature>
<feature type="cross-link" description="Glycyl lysine isopeptide (Lys-Gly) (interchain with G-Cter in SUMO1); alternate" evidence="21">
    <location>
        <position position="106"/>
    </location>
</feature>
<feature type="cross-link" description="Glycyl lysine isopeptide (Lys-Gly) (interchain with G-Cter in SUMO2); alternate" evidence="21">
    <location>
        <position position="106"/>
    </location>
</feature>
<feature type="splice variant" id="VSP_022528" description="In isoform 4 and isoform 5." evidence="6 7">
    <location>
        <begin position="1"/>
        <end position="446"/>
    </location>
</feature>
<feature type="splice variant" id="VSP_022529" description="In isoform 6." evidence="9">
    <original>ITKEEEREKKF</original>
    <variation>VTICVNTLQVI</variation>
    <location>
        <begin position="110"/>
        <end position="120"/>
    </location>
</feature>
<feature type="splice variant" id="VSP_022530" description="In isoform 6." evidence="9">
    <location>
        <begin position="121"/>
        <end position="1007"/>
    </location>
</feature>
<feature type="splice variant" id="VSP_022531" description="In isoform 3, isoform 4 and isoform 5." evidence="6 7">
    <location>
        <begin position="619"/>
        <end position="621"/>
    </location>
</feature>
<feature type="splice variant" id="VSP_022532" description="In isoform 2, isoform 3 and isoform 5." evidence="6 7 8">
    <location>
        <begin position="663"/>
        <end position="686"/>
    </location>
</feature>
<feature type="sequence variant" id="VAR_030137" description="In dbSNP:rs10767.">
    <original>V</original>
    <variation>D</variation>
    <location>
        <position position="718"/>
    </location>
</feature>
<feature type="sequence conflict" description="In Ref. 5; CAI56708." evidence="10" ref="5">
    <original>A</original>
    <variation>T</variation>
    <location>
        <position position="12"/>
    </location>
</feature>
<feature type="sequence conflict" description="In Ref. 5; CAI56708." evidence="10" ref="5">
    <original>Q</original>
    <variation>H</variation>
    <location>
        <position position="66"/>
    </location>
</feature>
<feature type="sequence conflict" description="In Ref. 5; CAI56708." evidence="10" ref="5">
    <original>D</original>
    <variation>A</variation>
    <location>
        <position position="426"/>
    </location>
</feature>
<feature type="sequence conflict" description="In Ref. 1; BAB55046." evidence="10" ref="1">
    <original>K</original>
    <variation>E</variation>
    <location>
        <position position="709"/>
    </location>
</feature>
<feature type="sequence conflict" description="In Ref. 1; BAB55046/BAB55125." evidence="10" ref="1">
    <original>E</original>
    <variation>G</variation>
    <location>
        <position position="900"/>
    </location>
</feature>
<feature type="sequence conflict" description="In Ref. 1; BAB14933." evidence="10" ref="1">
    <original>K</original>
    <variation>E</variation>
    <location>
        <position position="959"/>
    </location>
</feature>
<evidence type="ECO:0000255" key="1"/>
<evidence type="ECO:0000255" key="2">
    <source>
        <dbReference type="PROSITE-ProRule" id="PRU00176"/>
    </source>
</evidence>
<evidence type="ECO:0000255" key="3">
    <source>
        <dbReference type="PROSITE-ProRule" id="PRU00723"/>
    </source>
</evidence>
<evidence type="ECO:0000256" key="4">
    <source>
        <dbReference type="SAM" id="MobiDB-lite"/>
    </source>
</evidence>
<evidence type="ECO:0000269" key="5">
    <source>
    </source>
</evidence>
<evidence type="ECO:0000303" key="6">
    <source>
    </source>
</evidence>
<evidence type="ECO:0000303" key="7">
    <source>
    </source>
</evidence>
<evidence type="ECO:0000303" key="8">
    <source>
    </source>
</evidence>
<evidence type="ECO:0000303" key="9">
    <source ref="2"/>
</evidence>
<evidence type="ECO:0000305" key="10"/>
<evidence type="ECO:0000312" key="11">
    <source>
        <dbReference type="HGNC" id="HGNC:20327"/>
    </source>
</evidence>
<evidence type="ECO:0007744" key="12">
    <source>
    </source>
</evidence>
<evidence type="ECO:0007744" key="13">
    <source>
    </source>
</evidence>
<evidence type="ECO:0007744" key="14">
    <source>
    </source>
</evidence>
<evidence type="ECO:0007744" key="15">
    <source>
    </source>
</evidence>
<evidence type="ECO:0007744" key="16">
    <source>
    </source>
</evidence>
<evidence type="ECO:0007744" key="17">
    <source>
    </source>
</evidence>
<evidence type="ECO:0007744" key="18">
    <source>
    </source>
</evidence>
<evidence type="ECO:0007744" key="19">
    <source>
    </source>
</evidence>
<evidence type="ECO:0007744" key="20">
    <source>
    </source>
</evidence>
<evidence type="ECO:0007744" key="21">
    <source>
    </source>
</evidence>
<evidence type="ECO:0007744" key="22">
    <source>
    </source>
</evidence>
<reference key="1">
    <citation type="journal article" date="2004" name="Nat. Genet.">
        <title>Complete sequencing and characterization of 21,243 full-length human cDNAs.</title>
        <authorList>
            <person name="Ota T."/>
            <person name="Suzuki Y."/>
            <person name="Nishikawa T."/>
            <person name="Otsuki T."/>
            <person name="Sugiyama T."/>
            <person name="Irie R."/>
            <person name="Wakamatsu A."/>
            <person name="Hayashi K."/>
            <person name="Sato H."/>
            <person name="Nagai K."/>
            <person name="Kimura K."/>
            <person name="Makita H."/>
            <person name="Sekine M."/>
            <person name="Obayashi M."/>
            <person name="Nishi T."/>
            <person name="Shibahara T."/>
            <person name="Tanaka T."/>
            <person name="Ishii S."/>
            <person name="Yamamoto J."/>
            <person name="Saito K."/>
            <person name="Kawai Y."/>
            <person name="Isono Y."/>
            <person name="Nakamura Y."/>
            <person name="Nagahari K."/>
            <person name="Murakami K."/>
            <person name="Yasuda T."/>
            <person name="Iwayanagi T."/>
            <person name="Wagatsuma M."/>
            <person name="Shiratori A."/>
            <person name="Sudo H."/>
            <person name="Hosoiri T."/>
            <person name="Kaku Y."/>
            <person name="Kodaira H."/>
            <person name="Kondo H."/>
            <person name="Sugawara M."/>
            <person name="Takahashi M."/>
            <person name="Kanda K."/>
            <person name="Yokoi T."/>
            <person name="Furuya T."/>
            <person name="Kikkawa E."/>
            <person name="Omura Y."/>
            <person name="Abe K."/>
            <person name="Kamihara K."/>
            <person name="Katsuta N."/>
            <person name="Sato K."/>
            <person name="Tanikawa M."/>
            <person name="Yamazaki M."/>
            <person name="Ninomiya K."/>
            <person name="Ishibashi T."/>
            <person name="Yamashita H."/>
            <person name="Murakawa K."/>
            <person name="Fujimori K."/>
            <person name="Tanai H."/>
            <person name="Kimata M."/>
            <person name="Watanabe M."/>
            <person name="Hiraoka S."/>
            <person name="Chiba Y."/>
            <person name="Ishida S."/>
            <person name="Ono Y."/>
            <person name="Takiguchi S."/>
            <person name="Watanabe S."/>
            <person name="Yosida M."/>
            <person name="Hotuta T."/>
            <person name="Kusano J."/>
            <person name="Kanehori K."/>
            <person name="Takahashi-Fujii A."/>
            <person name="Hara H."/>
            <person name="Tanase T.-O."/>
            <person name="Nomura Y."/>
            <person name="Togiya S."/>
            <person name="Komai F."/>
            <person name="Hara R."/>
            <person name="Takeuchi K."/>
            <person name="Arita M."/>
            <person name="Imose N."/>
            <person name="Musashino K."/>
            <person name="Yuuki H."/>
            <person name="Oshima A."/>
            <person name="Sasaki N."/>
            <person name="Aotsuka S."/>
            <person name="Yoshikawa Y."/>
            <person name="Matsunawa H."/>
            <person name="Ichihara T."/>
            <person name="Shiohata N."/>
            <person name="Sano S."/>
            <person name="Moriya S."/>
            <person name="Momiyama H."/>
            <person name="Satoh N."/>
            <person name="Takami S."/>
            <person name="Terashima Y."/>
            <person name="Suzuki O."/>
            <person name="Nakagawa S."/>
            <person name="Senoh A."/>
            <person name="Mizoguchi H."/>
            <person name="Goto Y."/>
            <person name="Shimizu F."/>
            <person name="Wakebe H."/>
            <person name="Hishigaki H."/>
            <person name="Watanabe T."/>
            <person name="Sugiyama A."/>
            <person name="Takemoto M."/>
            <person name="Kawakami B."/>
            <person name="Yamazaki M."/>
            <person name="Watanabe K."/>
            <person name="Kumagai A."/>
            <person name="Itakura S."/>
            <person name="Fukuzumi Y."/>
            <person name="Fujimori Y."/>
            <person name="Komiyama M."/>
            <person name="Tashiro H."/>
            <person name="Tanigami A."/>
            <person name="Fujiwara T."/>
            <person name="Ono T."/>
            <person name="Yamada K."/>
            <person name="Fujii Y."/>
            <person name="Ozaki K."/>
            <person name="Hirao M."/>
            <person name="Ohmori Y."/>
            <person name="Kawabata A."/>
            <person name="Hikiji T."/>
            <person name="Kobatake N."/>
            <person name="Inagaki H."/>
            <person name="Ikema Y."/>
            <person name="Okamoto S."/>
            <person name="Okitani R."/>
            <person name="Kawakami T."/>
            <person name="Noguchi S."/>
            <person name="Itoh T."/>
            <person name="Shigeta K."/>
            <person name="Senba T."/>
            <person name="Matsumura K."/>
            <person name="Nakajima Y."/>
            <person name="Mizuno T."/>
            <person name="Morinaga M."/>
            <person name="Sasaki M."/>
            <person name="Togashi T."/>
            <person name="Oyama M."/>
            <person name="Hata H."/>
            <person name="Watanabe M."/>
            <person name="Komatsu T."/>
            <person name="Mizushima-Sugano J."/>
            <person name="Satoh T."/>
            <person name="Shirai Y."/>
            <person name="Takahashi Y."/>
            <person name="Nakagawa K."/>
            <person name="Okumura K."/>
            <person name="Nagase T."/>
            <person name="Nomura N."/>
            <person name="Kikuchi H."/>
            <person name="Masuho Y."/>
            <person name="Yamashita R."/>
            <person name="Nakai K."/>
            <person name="Yada T."/>
            <person name="Nakamura Y."/>
            <person name="Ohara O."/>
            <person name="Isogai T."/>
            <person name="Sugano S."/>
        </authorList>
    </citation>
    <scope>NUCLEOTIDE SEQUENCE [LARGE SCALE MRNA] (ISOFORMS 2 AND 5)</scope>
    <source>
        <tissue>Adipose tissue</tissue>
        <tissue>Embryo</tissue>
        <tissue>Teratocarcinoma</tissue>
        <tissue>Testis</tissue>
    </source>
</reference>
<reference key="2">
    <citation type="submission" date="1998-12" db="EMBL/GenBank/DDBJ databases">
        <title>Functional prediction of the coding sequences of 121 new genes deduced by analysis of cDNA clones from human fetal liver.</title>
        <authorList>
            <person name="Zhang C."/>
            <person name="Yu Y."/>
            <person name="Zhang S."/>
            <person name="Wei H."/>
            <person name="Zhou G."/>
            <person name="Ouyang S."/>
            <person name="Luo L."/>
            <person name="Bi J."/>
            <person name="Liu M."/>
            <person name="He F."/>
        </authorList>
    </citation>
    <scope>NUCLEOTIDE SEQUENCE [LARGE SCALE MRNA] (ISOFORM 6)</scope>
    <source>
        <tissue>Fetal liver</tissue>
    </source>
</reference>
<reference key="3">
    <citation type="journal article" date="2004" name="Nature">
        <title>The DNA sequence and analysis of human chromosome 13.</title>
        <authorList>
            <person name="Dunham A."/>
            <person name="Matthews L.H."/>
            <person name="Burton J."/>
            <person name="Ashurst J.L."/>
            <person name="Howe K.L."/>
            <person name="Ashcroft K.J."/>
            <person name="Beare D.M."/>
            <person name="Burford D.C."/>
            <person name="Hunt S.E."/>
            <person name="Griffiths-Jones S."/>
            <person name="Jones M.C."/>
            <person name="Keenan S.J."/>
            <person name="Oliver K."/>
            <person name="Scott C.E."/>
            <person name="Ainscough R."/>
            <person name="Almeida J.P."/>
            <person name="Ambrose K.D."/>
            <person name="Andrews D.T."/>
            <person name="Ashwell R.I.S."/>
            <person name="Babbage A.K."/>
            <person name="Bagguley C.L."/>
            <person name="Bailey J."/>
            <person name="Bannerjee R."/>
            <person name="Barlow K.F."/>
            <person name="Bates K."/>
            <person name="Beasley H."/>
            <person name="Bird C.P."/>
            <person name="Bray-Allen S."/>
            <person name="Brown A.J."/>
            <person name="Brown J.Y."/>
            <person name="Burrill W."/>
            <person name="Carder C."/>
            <person name="Carter N.P."/>
            <person name="Chapman J.C."/>
            <person name="Clamp M.E."/>
            <person name="Clark S.Y."/>
            <person name="Clarke G."/>
            <person name="Clee C.M."/>
            <person name="Clegg S.C."/>
            <person name="Cobley V."/>
            <person name="Collins J.E."/>
            <person name="Corby N."/>
            <person name="Coville G.J."/>
            <person name="Deloukas P."/>
            <person name="Dhami P."/>
            <person name="Dunham I."/>
            <person name="Dunn M."/>
            <person name="Earthrowl M.E."/>
            <person name="Ellington A.G."/>
            <person name="Faulkner L."/>
            <person name="Frankish A.G."/>
            <person name="Frankland J."/>
            <person name="French L."/>
            <person name="Garner P."/>
            <person name="Garnett J."/>
            <person name="Gilbert J.G.R."/>
            <person name="Gilson C.J."/>
            <person name="Ghori J."/>
            <person name="Grafham D.V."/>
            <person name="Gribble S.M."/>
            <person name="Griffiths C."/>
            <person name="Hall R.E."/>
            <person name="Hammond S."/>
            <person name="Harley J.L."/>
            <person name="Hart E.A."/>
            <person name="Heath P.D."/>
            <person name="Howden P.J."/>
            <person name="Huckle E.J."/>
            <person name="Hunt P.J."/>
            <person name="Hunt A.R."/>
            <person name="Johnson C."/>
            <person name="Johnson D."/>
            <person name="Kay M."/>
            <person name="Kimberley A.M."/>
            <person name="King A."/>
            <person name="Laird G.K."/>
            <person name="Langford C.J."/>
            <person name="Lawlor S."/>
            <person name="Leongamornlert D.A."/>
            <person name="Lloyd D.M."/>
            <person name="Lloyd C."/>
            <person name="Loveland J.E."/>
            <person name="Lovell J."/>
            <person name="Martin S."/>
            <person name="Mashreghi-Mohammadi M."/>
            <person name="McLaren S.J."/>
            <person name="McMurray A."/>
            <person name="Milne S."/>
            <person name="Moore M.J.F."/>
            <person name="Nickerson T."/>
            <person name="Palmer S.A."/>
            <person name="Pearce A.V."/>
            <person name="Peck A.I."/>
            <person name="Pelan S."/>
            <person name="Phillimore B."/>
            <person name="Porter K.M."/>
            <person name="Rice C.M."/>
            <person name="Searle S."/>
            <person name="Sehra H.K."/>
            <person name="Shownkeen R."/>
            <person name="Skuce C.D."/>
            <person name="Smith M."/>
            <person name="Steward C.A."/>
            <person name="Sycamore N."/>
            <person name="Tester J."/>
            <person name="Thomas D.W."/>
            <person name="Tracey A."/>
            <person name="Tromans A."/>
            <person name="Tubby B."/>
            <person name="Wall M."/>
            <person name="Wallis J.M."/>
            <person name="West A.P."/>
            <person name="Whitehead S.L."/>
            <person name="Willey D.L."/>
            <person name="Wilming L."/>
            <person name="Wray P.W."/>
            <person name="Wright M.W."/>
            <person name="Young L."/>
            <person name="Coulson A."/>
            <person name="Durbin R.M."/>
            <person name="Hubbard T."/>
            <person name="Sulston J.E."/>
            <person name="Beck S."/>
            <person name="Bentley D.R."/>
            <person name="Rogers J."/>
            <person name="Ross M.T."/>
        </authorList>
    </citation>
    <scope>NUCLEOTIDE SEQUENCE [LARGE SCALE GENOMIC DNA]</scope>
</reference>
<reference key="4">
    <citation type="journal article" date="2004" name="Genome Res.">
        <title>The status, quality, and expansion of the NIH full-length cDNA project: the Mammalian Gene Collection (MGC).</title>
        <authorList>
            <consortium name="The MGC Project Team"/>
        </authorList>
    </citation>
    <scope>NUCLEOTIDE SEQUENCE [LARGE SCALE MRNA] (ISOFORMS 2; 3 AND 4)</scope>
    <source>
        <tissue>Lymph</tissue>
    </source>
</reference>
<reference key="5">
    <citation type="journal article" date="2007" name="BMC Genomics">
        <title>The full-ORF clone resource of the German cDNA consortium.</title>
        <authorList>
            <person name="Bechtel S."/>
            <person name="Rosenfelder H."/>
            <person name="Duda A."/>
            <person name="Schmidt C.P."/>
            <person name="Ernst U."/>
            <person name="Wellenreuther R."/>
            <person name="Mehrle A."/>
            <person name="Schuster C."/>
            <person name="Bahr A."/>
            <person name="Bloecker H."/>
            <person name="Heubner D."/>
            <person name="Hoerlein A."/>
            <person name="Michel G."/>
            <person name="Wedler H."/>
            <person name="Koehrer K."/>
            <person name="Ottenwaelder B."/>
            <person name="Poustka A."/>
            <person name="Wiemann S."/>
            <person name="Schupp I."/>
        </authorList>
    </citation>
    <scope>NUCLEOTIDE SEQUENCE [LARGE SCALE MRNA] OF 1-911 (ISOFORM 2)</scope>
    <scope>NUCLEOTIDE SEQUENCE [LARGE SCALE MRNA] OF 215-869 (ISOFORM 1)</scope>
    <source>
        <tissue>Amygdala</tissue>
    </source>
</reference>
<reference key="6">
    <citation type="journal article" date="2001" name="Proc. Natl. Acad. Sci. U.S.A.">
        <title>Serological detection of cutaneous T-cell lymphoma-associated antigens.</title>
        <authorList>
            <person name="Eichmueller S."/>
            <person name="Usener D."/>
            <person name="Dummer R."/>
            <person name="Stein A."/>
            <person name="Thiel D."/>
            <person name="Schadendorf D."/>
        </authorList>
    </citation>
    <scope>NUCLEOTIDE SEQUENCE [MRNA] OF 703-1007 (ISOFORM 1/2/3/4/5)</scope>
    <source>
        <tissue>Testis</tissue>
    </source>
</reference>
<reference key="7">
    <citation type="journal article" date="2006" name="Cell">
        <title>Global, in vivo, and site-specific phosphorylation dynamics in signaling networks.</title>
        <authorList>
            <person name="Olsen J.V."/>
            <person name="Blagoev B."/>
            <person name="Gnad F."/>
            <person name="Macek B."/>
            <person name="Kumar C."/>
            <person name="Mortensen P."/>
            <person name="Mann M."/>
        </authorList>
    </citation>
    <scope>PHOSPHORYLATION [LARGE SCALE ANALYSIS] AT SER-127</scope>
    <scope>IDENTIFICATION BY MASS SPECTROMETRY [LARGE SCALE ANALYSIS]</scope>
    <source>
        <tissue>Cervix carcinoma</tissue>
    </source>
</reference>
<reference key="8">
    <citation type="journal article" date="2006" name="Nat. Biotechnol.">
        <title>A probability-based approach for high-throughput protein phosphorylation analysis and site localization.</title>
        <authorList>
            <person name="Beausoleil S.A."/>
            <person name="Villen J."/>
            <person name="Gerber S.A."/>
            <person name="Rush J."/>
            <person name="Gygi S.P."/>
        </authorList>
    </citation>
    <scope>PHOSPHORYLATION [LARGE SCALE ANALYSIS] AT SER-616</scope>
    <scope>IDENTIFICATION BY MASS SPECTROMETRY [LARGE SCALE ANALYSIS]</scope>
    <source>
        <tissue>Cervix carcinoma</tissue>
    </source>
</reference>
<reference key="9">
    <citation type="journal article" date="2008" name="J. Proteome Res.">
        <title>Combining protein-based IMAC, peptide-based IMAC, and MudPIT for efficient phosphoproteomic analysis.</title>
        <authorList>
            <person name="Cantin G.T."/>
            <person name="Yi W."/>
            <person name="Lu B."/>
            <person name="Park S.K."/>
            <person name="Xu T."/>
            <person name="Lee J.-D."/>
            <person name="Yates J.R. III"/>
        </authorList>
    </citation>
    <scope>PHOSPHORYLATION [LARGE SCALE ANALYSIS] AT SER-127</scope>
    <scope>IDENTIFICATION BY MASS SPECTROMETRY [LARGE SCALE ANALYSIS]</scope>
    <source>
        <tissue>Cervix carcinoma</tissue>
    </source>
</reference>
<reference key="10">
    <citation type="journal article" date="2008" name="Proc. Natl. Acad. Sci. U.S.A.">
        <title>A quantitative atlas of mitotic phosphorylation.</title>
        <authorList>
            <person name="Dephoure N."/>
            <person name="Zhou C."/>
            <person name="Villen J."/>
            <person name="Beausoleil S.A."/>
            <person name="Bakalarski C.E."/>
            <person name="Elledge S.J."/>
            <person name="Gygi S.P."/>
        </authorList>
    </citation>
    <scope>PHOSPHORYLATION [LARGE SCALE ANALYSIS] AT SER-518 AND SER-616</scope>
    <scope>IDENTIFICATION BY MASS SPECTROMETRY [LARGE SCALE ANALYSIS]</scope>
    <source>
        <tissue>Cervix carcinoma</tissue>
    </source>
</reference>
<reference key="11">
    <citation type="journal article" date="2009" name="Science">
        <title>Lysine acetylation targets protein complexes and co-regulates major cellular functions.</title>
        <authorList>
            <person name="Choudhary C."/>
            <person name="Kumar C."/>
            <person name="Gnad F."/>
            <person name="Nielsen M.L."/>
            <person name="Rehman M."/>
            <person name="Walther T.C."/>
            <person name="Olsen J.V."/>
            <person name="Mann M."/>
        </authorList>
    </citation>
    <scope>ACETYLATION [LARGE SCALE ANALYSIS] AT LYS-510</scope>
    <scope>IDENTIFICATION BY MASS SPECTROMETRY [LARGE SCALE ANALYSIS]</scope>
</reference>
<reference key="12">
    <citation type="journal article" date="2010" name="Sci. Signal.">
        <title>Quantitative phosphoproteomics reveals widespread full phosphorylation site occupancy during mitosis.</title>
        <authorList>
            <person name="Olsen J.V."/>
            <person name="Vermeulen M."/>
            <person name="Santamaria A."/>
            <person name="Kumar C."/>
            <person name="Miller M.L."/>
            <person name="Jensen L.J."/>
            <person name="Gnad F."/>
            <person name="Cox J."/>
            <person name="Jensen T.S."/>
            <person name="Nigg E.A."/>
            <person name="Brunak S."/>
            <person name="Mann M."/>
        </authorList>
    </citation>
    <scope>PHOSPHORYLATION [LARGE SCALE ANALYSIS] AT SER-127</scope>
    <scope>IDENTIFICATION BY MASS SPECTROMETRY [LARGE SCALE ANALYSIS]</scope>
    <source>
        <tissue>Cervix carcinoma</tissue>
    </source>
</reference>
<reference key="13">
    <citation type="journal article" date="2011" name="BMC Syst. Biol.">
        <title>Initial characterization of the human central proteome.</title>
        <authorList>
            <person name="Burkard T.R."/>
            <person name="Planyavsky M."/>
            <person name="Kaupe I."/>
            <person name="Breitwieser F.P."/>
            <person name="Buerckstuemmer T."/>
            <person name="Bennett K.L."/>
            <person name="Superti-Furga G."/>
            <person name="Colinge J."/>
        </authorList>
    </citation>
    <scope>IDENTIFICATION BY MASS SPECTROMETRY [LARGE SCALE ANALYSIS]</scope>
</reference>
<reference key="14">
    <citation type="journal article" date="2011" name="Sci. Signal.">
        <title>System-wide temporal characterization of the proteome and phosphoproteome of human embryonic stem cell differentiation.</title>
        <authorList>
            <person name="Rigbolt K.T."/>
            <person name="Prokhorova T.A."/>
            <person name="Akimov V."/>
            <person name="Henningsen J."/>
            <person name="Johansen P.T."/>
            <person name="Kratchmarova I."/>
            <person name="Kassem M."/>
            <person name="Mann M."/>
            <person name="Olsen J.V."/>
            <person name="Blagoev B."/>
        </authorList>
    </citation>
    <scope>PHOSPHORYLATION [LARGE SCALE ANALYSIS] AT SER-127</scope>
    <scope>IDENTIFICATION BY MASS SPECTROMETRY [LARGE SCALE ANALYSIS]</scope>
</reference>
<reference key="15">
    <citation type="journal article" date="2013" name="J. Proteome Res.">
        <title>Toward a comprehensive characterization of a human cancer cell phosphoproteome.</title>
        <authorList>
            <person name="Zhou H."/>
            <person name="Di Palma S."/>
            <person name="Preisinger C."/>
            <person name="Peng M."/>
            <person name="Polat A.N."/>
            <person name="Heck A.J."/>
            <person name="Mohammed S."/>
        </authorList>
    </citation>
    <scope>PHOSPHORYLATION [LARGE SCALE ANALYSIS] AT SER-127; SER-496 AND SER-518</scope>
    <scope>IDENTIFICATION BY MASS SPECTROMETRY [LARGE SCALE ANALYSIS]</scope>
    <source>
        <tissue>Cervix carcinoma</tissue>
        <tissue>Erythroleukemia</tissue>
    </source>
</reference>
<reference key="16">
    <citation type="journal article" date="2014" name="J. Proteomics">
        <title>An enzyme assisted RP-RPLC approach for in-depth analysis of human liver phosphoproteome.</title>
        <authorList>
            <person name="Bian Y."/>
            <person name="Song C."/>
            <person name="Cheng K."/>
            <person name="Dong M."/>
            <person name="Wang F."/>
            <person name="Huang J."/>
            <person name="Sun D."/>
            <person name="Wang L."/>
            <person name="Ye M."/>
            <person name="Zou H."/>
        </authorList>
    </citation>
    <scope>PHOSPHORYLATION [LARGE SCALE ANALYSIS] AT SER-518 AND SER-616</scope>
    <scope>IDENTIFICATION BY MASS SPECTROMETRY [LARGE SCALE ANALYSIS]</scope>
    <source>
        <tissue>Liver</tissue>
    </source>
</reference>
<reference key="17">
    <citation type="journal article" date="2014" name="Proc. Natl. Acad. Sci. U.S.A.">
        <title>Mapping of SUMO sites and analysis of SUMOylation changes induced by external stimuli.</title>
        <authorList>
            <person name="Impens F."/>
            <person name="Radoshevich L."/>
            <person name="Cossart P."/>
            <person name="Ribet D."/>
        </authorList>
    </citation>
    <scope>SUMOYLATION [LARGE SCALE ANALYSIS] AT LYS-106</scope>
    <scope>IDENTIFICATION BY MASS SPECTROMETRY [LARGE SCALE ANALYSIS]</scope>
</reference>
<reference key="18">
    <citation type="journal article" date="2017" name="Nat. Struct. Mol. Biol.">
        <title>Site-specific mapping of the human SUMO proteome reveals co-modification with phosphorylation.</title>
        <authorList>
            <person name="Hendriks I.A."/>
            <person name="Lyon D."/>
            <person name="Young C."/>
            <person name="Jensen L.J."/>
            <person name="Vertegaal A.C."/>
            <person name="Nielsen M.L."/>
        </authorList>
    </citation>
    <scope>SUMOYLATION [LARGE SCALE ANALYSIS] AT LYS-94</scope>
    <scope>IDENTIFICATION BY MASS SPECTROMETRY [LARGE SCALE ANALYSIS]</scope>
</reference>
<reference key="19">
    <citation type="journal article" date="2020" name="Nucleic Acids Res.">
        <title>The human ZC3H3 and RBM26/27 proteins are critical for PAXT-mediated nuclear RNA decay.</title>
        <authorList>
            <person name="Silla T."/>
            <person name="Schmid M."/>
            <person name="Dou Y."/>
            <person name="Garland W."/>
            <person name="Milek M."/>
            <person name="Imami K."/>
            <person name="Johnsen D."/>
            <person name="Polak P."/>
            <person name="Andersen J.S."/>
            <person name="Selbach M."/>
            <person name="Landthaler M."/>
            <person name="Jensen T.H."/>
        </authorList>
    </citation>
    <scope>FUNCTION</scope>
</reference>
<gene>
    <name evidence="11" type="primary">RBM26</name>
    <name type="synonym">C13orf10</name>
    <name type="ORF">PRO1777</name>
</gene>
<name>RBM26_HUMAN</name>
<protein>
    <recommendedName>
        <fullName evidence="10">RNA-binding protein 26</fullName>
    </recommendedName>
    <alternativeName>
        <fullName>CTCL tumor antigen se70-2</fullName>
    </alternativeName>
    <alternativeName>
        <fullName>RNA-binding motif protein 26</fullName>
    </alternativeName>
</protein>
<sequence>MVSKMIIENFEALKSWLSKTLEPICDADPSALAKYVLALVKKDKSEKELKALCIDQLDVFLQKETQIFVEKLFDAVNTKSYLPPPEQPSSGSLKVEFFPHQEKDIKKEEITKEEEREKKFSRRLNHSPPQSSSRYRENRSRDERKKDDRSRKRDYDRNPPRRDSYRDRYNRRRGRSRSYSRSRSRSWSKERLRERDRDRSRTRSRSRTRSRERDLVKPKYDLDRTDPLENNYTPVSSVPSISSGHYPVPTLSSTITVIAPTHHGNNTTESWSEFHEDQVDHNSYVRPPMPKKRCRDYDEKGFCMRGDMCPFDHGSDPVVVEDVNLPGMLPFPAQPPVVEGPPPPGLPPPPPILTPPPVNLRPPVPPPGPLPPSLPPVTGPPPPLPPLQPSGMDAPPNSATSSVPTVVTTGIHHQPPPAPPSLFTADTYDTDGYNPEAPSITNTSRPMYRHRVHAQRPNLIGLTSGDMDLPPREKPPNKSSMRIVVDSESRKRTIGSGEPGVPTKKTWFDKPNFNRTNSPGFQKKVQFGNENTKLELRKVPPELNNISKLNEHFSRFGTLVNLQVAYNGDPEGALIQFATYEEAKKAISSTEAVLNNRFIKVYWHREGSTQQLQTTSPKVMQPLVQQPILPVVKQSVKERLGPVPSSTIEPAEAQSASSDLPQNVTKLSVKDRLGFVSKPSVSATEKVLSTSTGLTKTVYNPAALKAAQKTLLVSTSAVDNNEAQKKKQEALKLQQDVRKRKQEILEKHIETQKMLISKLEKNKTMKSEDKAEIMKTLEVLTKNITKLKDEVKAASPGRCLPKSIKTKTQMQKELLDTELDLYKKMQAGEEVTELRRKYTELQLEAAKRGILSSGRGRGIHSRGRGAVHGRGRGRGRGRGVPGHAVVDHRPRALEISAFTESDREDLLPHFAQYGEIEDCQIDDSSLHAVITFKTRAEAEAAAVHGARFKGQDLKLAWNKPVTNISAVETEEVEPDEEEFQEESLVDDSLLQDDDEEEEDNESRSWRR</sequence>
<proteinExistence type="evidence at protein level"/>
<comment type="function">
    <text evidence="5">May be involved in the turnover of nuclear polyadenylated (pA+) RNA.</text>
</comment>
<comment type="interaction">
    <interactant intactId="EBI-3232077">
        <id>Q5T8P6</id>
    </interactant>
    <interactant intactId="EBI-713635">
        <id>O43639</id>
        <label>NCK2</label>
    </interactant>
    <organismsDiffer>false</organismsDiffer>
    <experiments>3</experiments>
</comment>
<comment type="alternative products">
    <event type="alternative splicing"/>
    <isoform>
        <id>Q5T8P6-1</id>
        <name>1</name>
        <sequence type="displayed"/>
    </isoform>
    <isoform>
        <id>Q5T8P6-2</id>
        <name>2</name>
        <sequence type="described" ref="VSP_022532"/>
    </isoform>
    <isoform>
        <id>Q5T8P6-3</id>
        <name>3</name>
        <sequence type="described" ref="VSP_022531 VSP_022532"/>
    </isoform>
    <isoform>
        <id>Q5T8P6-4</id>
        <name>4</name>
        <sequence type="described" ref="VSP_022528 VSP_022531"/>
    </isoform>
    <isoform>
        <id>Q5T8P6-5</id>
        <name>5</name>
        <sequence type="described" ref="VSP_022528 VSP_022531 VSP_022532"/>
    </isoform>
    <isoform>
        <id>Q5T8P6-6</id>
        <name>6</name>
        <sequence type="described" ref="VSP_022529 VSP_022530"/>
    </isoform>
</comment>
<comment type="sequence caution" evidence="10">
    <conflict type="erroneous initiation">
        <sequence resource="EMBL-CDS" id="AAG34912"/>
    </conflict>
    <text>Truncated N-terminus.</text>
</comment>
<comment type="sequence caution" evidence="10">
    <conflict type="erroneous initiation">
        <sequence resource="EMBL-CDS" id="BAB14933"/>
    </conflict>
    <text>Truncated N-terminus.</text>
</comment>
<comment type="sequence caution" evidence="10">
    <conflict type="erroneous initiation">
        <sequence resource="EMBL-CDS" id="BAB55125"/>
    </conflict>
    <text>Truncated N-terminus.</text>
</comment>
<dbReference type="EMBL" id="AK024610">
    <property type="protein sequence ID" value="BAB14933.1"/>
    <property type="status" value="ALT_INIT"/>
    <property type="molecule type" value="mRNA"/>
</dbReference>
<dbReference type="EMBL" id="AK027339">
    <property type="protein sequence ID" value="BAB55046.1"/>
    <property type="molecule type" value="mRNA"/>
</dbReference>
<dbReference type="EMBL" id="AK027456">
    <property type="protein sequence ID" value="BAB55125.1"/>
    <property type="status" value="ALT_INIT"/>
    <property type="molecule type" value="mRNA"/>
</dbReference>
<dbReference type="EMBL" id="AK302871">
    <property type="protein sequence ID" value="BAG64052.1"/>
    <property type="molecule type" value="mRNA"/>
</dbReference>
<dbReference type="EMBL" id="AF116667">
    <property type="protein sequence ID" value="AAF71087.1"/>
    <property type="molecule type" value="mRNA"/>
</dbReference>
<dbReference type="EMBL" id="AL139006">
    <property type="status" value="NOT_ANNOTATED_CDS"/>
    <property type="molecule type" value="Genomic_DNA"/>
</dbReference>
<dbReference type="EMBL" id="AL159974">
    <property type="status" value="NOT_ANNOTATED_CDS"/>
    <property type="molecule type" value="Genomic_DNA"/>
</dbReference>
<dbReference type="EMBL" id="BC041655">
    <property type="protein sequence ID" value="AAH41655.1"/>
    <property type="molecule type" value="mRNA"/>
</dbReference>
<dbReference type="EMBL" id="BC111697">
    <property type="protein sequence ID" value="AAI11698.1"/>
    <property type="molecule type" value="mRNA"/>
</dbReference>
<dbReference type="EMBL" id="BC111739">
    <property type="protein sequence ID" value="AAI11740.1"/>
    <property type="molecule type" value="mRNA"/>
</dbReference>
<dbReference type="EMBL" id="AL834343">
    <property type="protein sequence ID" value="CAD39009.3"/>
    <property type="molecule type" value="mRNA"/>
</dbReference>
<dbReference type="EMBL" id="BX648672">
    <property type="protein sequence ID" value="CAI56708.1"/>
    <property type="molecule type" value="mRNA"/>
</dbReference>
<dbReference type="EMBL" id="AF273052">
    <property type="protein sequence ID" value="AAG34912.1"/>
    <property type="status" value="ALT_INIT"/>
    <property type="molecule type" value="mRNA"/>
</dbReference>
<dbReference type="CCDS" id="CCDS66566.1">
    <molecule id="Q5T8P6-2"/>
</dbReference>
<dbReference type="CCDS" id="CCDS91822.1">
    <molecule id="Q5T8P6-1"/>
</dbReference>
<dbReference type="CCDS" id="CCDS9462.1">
    <molecule id="Q5T8P6-3"/>
</dbReference>
<dbReference type="RefSeq" id="NP_001273560.1">
    <property type="nucleotide sequence ID" value="NM_001286631.1"/>
</dbReference>
<dbReference type="RefSeq" id="NP_001273561.1">
    <molecule id="Q5T8P6-2"/>
    <property type="nucleotide sequence ID" value="NM_001286632.2"/>
</dbReference>
<dbReference type="RefSeq" id="NP_001353664.1">
    <molecule id="Q5T8P6-1"/>
    <property type="nucleotide sequence ID" value="NM_001366735.2"/>
</dbReference>
<dbReference type="RefSeq" id="NP_071401.3">
    <molecule id="Q5T8P6-3"/>
    <property type="nucleotide sequence ID" value="NM_022118.4"/>
</dbReference>
<dbReference type="RefSeq" id="XP_011533490.1">
    <property type="nucleotide sequence ID" value="XM_011535188.2"/>
</dbReference>
<dbReference type="RefSeq" id="XP_011533494.1">
    <property type="nucleotide sequence ID" value="XM_011535192.2"/>
</dbReference>
<dbReference type="RefSeq" id="XP_011533495.1">
    <property type="nucleotide sequence ID" value="XM_011535193.2"/>
</dbReference>
<dbReference type="SMR" id="Q5T8P6"/>
<dbReference type="BioGRID" id="122035">
    <property type="interactions" value="158"/>
</dbReference>
<dbReference type="ComplexPortal" id="CPX-2750">
    <property type="entry name" value="Poly(A) tail exosome targeting complex, RBM26 variant"/>
</dbReference>
<dbReference type="FunCoup" id="Q5T8P6">
    <property type="interactions" value="4700"/>
</dbReference>
<dbReference type="IntAct" id="Q5T8P6">
    <property type="interactions" value="101"/>
</dbReference>
<dbReference type="MINT" id="Q5T8P6"/>
<dbReference type="STRING" id="9606.ENSP00000483408"/>
<dbReference type="GlyCosmos" id="Q5T8P6">
    <property type="glycosylation" value="7 sites, 2 glycans"/>
</dbReference>
<dbReference type="GlyGen" id="Q5T8P6">
    <property type="glycosylation" value="17 sites, 3 N-linked glycans (3 sites), 2 O-linked glycans (14 sites)"/>
</dbReference>
<dbReference type="iPTMnet" id="Q5T8P6"/>
<dbReference type="MetOSite" id="Q5T8P6"/>
<dbReference type="PhosphoSitePlus" id="Q5T8P6"/>
<dbReference type="BioMuta" id="RBM26"/>
<dbReference type="DMDM" id="124021002"/>
<dbReference type="jPOST" id="Q5T8P6"/>
<dbReference type="MassIVE" id="Q5T8P6"/>
<dbReference type="PaxDb" id="9606-ENSP00000483408"/>
<dbReference type="PeptideAtlas" id="Q5T8P6"/>
<dbReference type="ProteomicsDB" id="64744">
    <molecule id="Q5T8P6-1"/>
</dbReference>
<dbReference type="ProteomicsDB" id="64745">
    <molecule id="Q5T8P6-2"/>
</dbReference>
<dbReference type="ProteomicsDB" id="64746">
    <molecule id="Q5T8P6-3"/>
</dbReference>
<dbReference type="ProteomicsDB" id="64747">
    <molecule id="Q5T8P6-4"/>
</dbReference>
<dbReference type="ProteomicsDB" id="64748">
    <molecule id="Q5T8P6-5"/>
</dbReference>
<dbReference type="ProteomicsDB" id="64749">
    <molecule id="Q5T8P6-6"/>
</dbReference>
<dbReference type="Pumba" id="Q5T8P6"/>
<dbReference type="Antibodypedia" id="24703">
    <property type="antibodies" value="237 antibodies from 29 providers"/>
</dbReference>
<dbReference type="DNASU" id="64062"/>
<dbReference type="Ensembl" id="ENST00000267229.11">
    <molecule id="Q5T8P6-3"/>
    <property type="protein sequence ID" value="ENSP00000267229.7"/>
    <property type="gene ID" value="ENSG00000139746.16"/>
</dbReference>
<dbReference type="Ensembl" id="ENST00000438724.5">
    <molecule id="Q5T8P6-2"/>
    <property type="protein sequence ID" value="ENSP00000390222.1"/>
    <property type="gene ID" value="ENSG00000139746.16"/>
</dbReference>
<dbReference type="Ensembl" id="ENST00000438737.3">
    <molecule id="Q5T8P6-1"/>
    <property type="protein sequence ID" value="ENSP00000387531.2"/>
    <property type="gene ID" value="ENSG00000139746.16"/>
</dbReference>
<dbReference type="GeneID" id="64062"/>
<dbReference type="KEGG" id="hsa:64062"/>
<dbReference type="MANE-Select" id="ENST00000438737.3">
    <property type="protein sequence ID" value="ENSP00000387531.2"/>
    <property type="RefSeq nucleotide sequence ID" value="NM_001366735.2"/>
    <property type="RefSeq protein sequence ID" value="NP_001353664.1"/>
</dbReference>
<dbReference type="UCSC" id="uc001vky.4">
    <molecule id="Q5T8P6-1"/>
    <property type="organism name" value="human"/>
</dbReference>
<dbReference type="AGR" id="HGNC:20327"/>
<dbReference type="CTD" id="64062"/>
<dbReference type="DisGeNET" id="64062"/>
<dbReference type="GeneCards" id="RBM26"/>
<dbReference type="HGNC" id="HGNC:20327">
    <property type="gene designation" value="RBM26"/>
</dbReference>
<dbReference type="HPA" id="ENSG00000139746">
    <property type="expression patterns" value="Low tissue specificity"/>
</dbReference>
<dbReference type="MIM" id="620081">
    <property type="type" value="gene"/>
</dbReference>
<dbReference type="neXtProt" id="NX_Q5T8P6"/>
<dbReference type="OpenTargets" id="ENSG00000139746"/>
<dbReference type="PharmGKB" id="PA134982324"/>
<dbReference type="VEuPathDB" id="HostDB:ENSG00000139746"/>
<dbReference type="eggNOG" id="KOG2135">
    <property type="taxonomic scope" value="Eukaryota"/>
</dbReference>
<dbReference type="GeneTree" id="ENSGT00510000046929"/>
<dbReference type="HOGENOM" id="CLU_006190_0_0_1"/>
<dbReference type="InParanoid" id="Q5T8P6"/>
<dbReference type="OrthoDB" id="443401at2759"/>
<dbReference type="PAN-GO" id="Q5T8P6">
    <property type="GO annotations" value="2 GO annotations based on evolutionary models"/>
</dbReference>
<dbReference type="PhylomeDB" id="Q5T8P6"/>
<dbReference type="TreeFam" id="TF319253"/>
<dbReference type="PathwayCommons" id="Q5T8P6"/>
<dbReference type="SignaLink" id="Q5T8P6"/>
<dbReference type="BioGRID-ORCS" id="64062">
    <property type="hits" value="36 hits in 1163 CRISPR screens"/>
</dbReference>
<dbReference type="CD-CODE" id="DEE660B4">
    <property type="entry name" value="Stress granule"/>
</dbReference>
<dbReference type="ChiTaRS" id="RBM26">
    <property type="organism name" value="human"/>
</dbReference>
<dbReference type="GeneWiki" id="RBM26"/>
<dbReference type="GenomeRNAi" id="64062"/>
<dbReference type="Pharos" id="Q5T8P6">
    <property type="development level" value="Tdark"/>
</dbReference>
<dbReference type="PRO" id="PR:Q5T8P6"/>
<dbReference type="Proteomes" id="UP000005640">
    <property type="component" value="Chromosome 13"/>
</dbReference>
<dbReference type="RNAct" id="Q5T8P6">
    <property type="molecule type" value="protein"/>
</dbReference>
<dbReference type="Bgee" id="ENSG00000139746">
    <property type="expression patterns" value="Expressed in pylorus and 216 other cell types or tissues"/>
</dbReference>
<dbReference type="ExpressionAtlas" id="Q5T8P6">
    <property type="expression patterns" value="baseline and differential"/>
</dbReference>
<dbReference type="GO" id="GO:0005634">
    <property type="term" value="C:nucleus"/>
    <property type="evidence" value="ECO:0000318"/>
    <property type="project" value="GO_Central"/>
</dbReference>
<dbReference type="GO" id="GO:0003723">
    <property type="term" value="F:RNA binding"/>
    <property type="evidence" value="ECO:0007005"/>
    <property type="project" value="UniProtKB"/>
</dbReference>
<dbReference type="GO" id="GO:0008270">
    <property type="term" value="F:zinc ion binding"/>
    <property type="evidence" value="ECO:0007669"/>
    <property type="project" value="UniProtKB-KW"/>
</dbReference>
<dbReference type="CDD" id="cd12516">
    <property type="entry name" value="RRM1_RBM26"/>
    <property type="match status" value="1"/>
</dbReference>
<dbReference type="CDD" id="cd12258">
    <property type="entry name" value="RRM2_RBM26_like"/>
    <property type="match status" value="1"/>
</dbReference>
<dbReference type="FunFam" id="3.30.70.330:FF:000331">
    <property type="entry name" value="RNA binding motif protein 26"/>
    <property type="match status" value="1"/>
</dbReference>
<dbReference type="FunFam" id="3.30.70.330:FF:000330">
    <property type="entry name" value="RNA-binding motif protein 26"/>
    <property type="match status" value="1"/>
</dbReference>
<dbReference type="FunFam" id="1.20.1390.10:FF:000001">
    <property type="entry name" value="RNA-binding protein 26 isoform X2"/>
    <property type="match status" value="1"/>
</dbReference>
<dbReference type="Gene3D" id="3.30.70.330">
    <property type="match status" value="2"/>
</dbReference>
<dbReference type="Gene3D" id="1.20.1390.10">
    <property type="entry name" value="PWI domain"/>
    <property type="match status" value="1"/>
</dbReference>
<dbReference type="InterPro" id="IPR012677">
    <property type="entry name" value="Nucleotide-bd_a/b_plait_sf"/>
</dbReference>
<dbReference type="InterPro" id="IPR002483">
    <property type="entry name" value="PWI_dom"/>
</dbReference>
<dbReference type="InterPro" id="IPR035979">
    <property type="entry name" value="RBD_domain_sf"/>
</dbReference>
<dbReference type="InterPro" id="IPR039511">
    <property type="entry name" value="RBM26-like_RRM2"/>
</dbReference>
<dbReference type="InterPro" id="IPR045137">
    <property type="entry name" value="RBM26/27"/>
</dbReference>
<dbReference type="InterPro" id="IPR034859">
    <property type="entry name" value="RBM26_RRM1"/>
</dbReference>
<dbReference type="InterPro" id="IPR000504">
    <property type="entry name" value="RRM_dom"/>
</dbReference>
<dbReference type="InterPro" id="IPR000571">
    <property type="entry name" value="Znf_CCCH"/>
</dbReference>
<dbReference type="PANTHER" id="PTHR14398">
    <property type="entry name" value="RNA RECOGNITION RRM/RNP DOMAIN"/>
    <property type="match status" value="1"/>
</dbReference>
<dbReference type="PANTHER" id="PTHR14398:SF2">
    <property type="entry name" value="RNA-BINDING PROTEIN 26"/>
    <property type="match status" value="1"/>
</dbReference>
<dbReference type="Pfam" id="PF01480">
    <property type="entry name" value="PWI"/>
    <property type="match status" value="1"/>
</dbReference>
<dbReference type="SMART" id="SM00360">
    <property type="entry name" value="RRM"/>
    <property type="match status" value="2"/>
</dbReference>
<dbReference type="SMART" id="SM00356">
    <property type="entry name" value="ZnF_C3H1"/>
    <property type="match status" value="1"/>
</dbReference>
<dbReference type="SUPFAM" id="SSF54928">
    <property type="entry name" value="RNA-binding domain, RBD"/>
    <property type="match status" value="2"/>
</dbReference>
<dbReference type="PROSITE" id="PS50102">
    <property type="entry name" value="RRM"/>
    <property type="match status" value="2"/>
</dbReference>
<dbReference type="PROSITE" id="PS50103">
    <property type="entry name" value="ZF_C3H1"/>
    <property type="match status" value="1"/>
</dbReference>
<organism>
    <name type="scientific">Homo sapiens</name>
    <name type="common">Human</name>
    <dbReference type="NCBI Taxonomy" id="9606"/>
    <lineage>
        <taxon>Eukaryota</taxon>
        <taxon>Metazoa</taxon>
        <taxon>Chordata</taxon>
        <taxon>Craniata</taxon>
        <taxon>Vertebrata</taxon>
        <taxon>Euteleostomi</taxon>
        <taxon>Mammalia</taxon>
        <taxon>Eutheria</taxon>
        <taxon>Euarchontoglires</taxon>
        <taxon>Primates</taxon>
        <taxon>Haplorrhini</taxon>
        <taxon>Catarrhini</taxon>
        <taxon>Hominidae</taxon>
        <taxon>Homo</taxon>
    </lineage>
</organism>
<accession>Q5T8P6</accession>
<accession>B4DZE0</accession>
<accession>Q2NKM2</accession>
<accession>Q2NKQ2</accession>
<accession>Q5CZH8</accession>
<accession>Q5T8P5</accession>
<accession>Q5T8P8</accession>
<accession>Q5U5P5</accession>
<accession>Q5W0G7</accession>
<accession>Q8N3H5</accession>
<accession>Q96K92</accession>
<accession>Q96SZ3</accession>
<accession>Q9H2F8</accession>
<accession>Q9H7F9</accession>
<accession>Q9P1G7</accession>
<keyword id="KW-0007">Acetylation</keyword>
<keyword id="KW-0025">Alternative splicing</keyword>
<keyword id="KW-0175">Coiled coil</keyword>
<keyword id="KW-1017">Isopeptide bond</keyword>
<keyword id="KW-0479">Metal-binding</keyword>
<keyword id="KW-0597">Phosphoprotein</keyword>
<keyword id="KW-1267">Proteomics identification</keyword>
<keyword id="KW-1185">Reference proteome</keyword>
<keyword id="KW-0677">Repeat</keyword>
<keyword id="KW-0694">RNA-binding</keyword>
<keyword id="KW-0832">Ubl conjugation</keyword>
<keyword id="KW-0862">Zinc</keyword>
<keyword id="KW-0863">Zinc-finger</keyword>